<protein>
    <recommendedName>
        <fullName evidence="1">Small ribosomal subunit protein uS19</fullName>
    </recommendedName>
    <alternativeName>
        <fullName evidence="2">30S ribosomal protein S19</fullName>
    </alternativeName>
</protein>
<proteinExistence type="inferred from homology"/>
<sequence>MARSLKKGPFVDDHLMKKVLKAKEEKNPKPIKTWSRRSTITPDMIGLTINVHNGRDFVPVYVTERHVGFKLGEFAPTRTFRGHKGSVQKKIGK</sequence>
<keyword id="KW-0687">Ribonucleoprotein</keyword>
<keyword id="KW-0689">Ribosomal protein</keyword>
<keyword id="KW-0694">RNA-binding</keyword>
<keyword id="KW-0699">rRNA-binding</keyword>
<accession>B9L6M9</accession>
<gene>
    <name evidence="1" type="primary">rpsS</name>
    <name type="ordered locus">NAMH_1637</name>
</gene>
<comment type="function">
    <text evidence="1">Protein S19 forms a complex with S13 that binds strongly to the 16S ribosomal RNA.</text>
</comment>
<comment type="similarity">
    <text evidence="1">Belongs to the universal ribosomal protein uS19 family.</text>
</comment>
<reference key="1">
    <citation type="journal article" date="2009" name="PLoS Genet.">
        <title>Adaptations to submarine hydrothermal environments exemplified by the genome of Nautilia profundicola.</title>
        <authorList>
            <person name="Campbell B.J."/>
            <person name="Smith J.L."/>
            <person name="Hanson T.E."/>
            <person name="Klotz M.G."/>
            <person name="Stein L.Y."/>
            <person name="Lee C.K."/>
            <person name="Wu D."/>
            <person name="Robinson J.M."/>
            <person name="Khouri H.M."/>
            <person name="Eisen J.A."/>
            <person name="Cary S.C."/>
        </authorList>
    </citation>
    <scope>NUCLEOTIDE SEQUENCE [LARGE SCALE GENOMIC DNA]</scope>
    <source>
        <strain>ATCC BAA-1463 / DSM 18972 / AmH</strain>
    </source>
</reference>
<evidence type="ECO:0000255" key="1">
    <source>
        <dbReference type="HAMAP-Rule" id="MF_00531"/>
    </source>
</evidence>
<evidence type="ECO:0000305" key="2"/>
<dbReference type="EMBL" id="CP001279">
    <property type="protein sequence ID" value="ACM93390.1"/>
    <property type="molecule type" value="Genomic_DNA"/>
</dbReference>
<dbReference type="RefSeq" id="WP_015902442.1">
    <property type="nucleotide sequence ID" value="NC_012115.1"/>
</dbReference>
<dbReference type="SMR" id="B9L6M9"/>
<dbReference type="STRING" id="598659.NAMH_1637"/>
<dbReference type="KEGG" id="nam:NAMH_1637"/>
<dbReference type="eggNOG" id="COG0185">
    <property type="taxonomic scope" value="Bacteria"/>
</dbReference>
<dbReference type="HOGENOM" id="CLU_144911_0_1_7"/>
<dbReference type="OrthoDB" id="9797833at2"/>
<dbReference type="Proteomes" id="UP000000448">
    <property type="component" value="Chromosome"/>
</dbReference>
<dbReference type="GO" id="GO:0005737">
    <property type="term" value="C:cytoplasm"/>
    <property type="evidence" value="ECO:0007669"/>
    <property type="project" value="UniProtKB-ARBA"/>
</dbReference>
<dbReference type="GO" id="GO:0015935">
    <property type="term" value="C:small ribosomal subunit"/>
    <property type="evidence" value="ECO:0007669"/>
    <property type="project" value="InterPro"/>
</dbReference>
<dbReference type="GO" id="GO:0019843">
    <property type="term" value="F:rRNA binding"/>
    <property type="evidence" value="ECO:0007669"/>
    <property type="project" value="UniProtKB-UniRule"/>
</dbReference>
<dbReference type="GO" id="GO:0003735">
    <property type="term" value="F:structural constituent of ribosome"/>
    <property type="evidence" value="ECO:0007669"/>
    <property type="project" value="InterPro"/>
</dbReference>
<dbReference type="GO" id="GO:0000028">
    <property type="term" value="P:ribosomal small subunit assembly"/>
    <property type="evidence" value="ECO:0007669"/>
    <property type="project" value="TreeGrafter"/>
</dbReference>
<dbReference type="GO" id="GO:0006412">
    <property type="term" value="P:translation"/>
    <property type="evidence" value="ECO:0007669"/>
    <property type="project" value="UniProtKB-UniRule"/>
</dbReference>
<dbReference type="FunFam" id="3.30.860.10:FF:000001">
    <property type="entry name" value="30S ribosomal protein S19"/>
    <property type="match status" value="1"/>
</dbReference>
<dbReference type="Gene3D" id="3.30.860.10">
    <property type="entry name" value="30s Ribosomal Protein S19, Chain A"/>
    <property type="match status" value="1"/>
</dbReference>
<dbReference type="HAMAP" id="MF_00531">
    <property type="entry name" value="Ribosomal_uS19"/>
    <property type="match status" value="1"/>
</dbReference>
<dbReference type="InterPro" id="IPR002222">
    <property type="entry name" value="Ribosomal_uS19"/>
</dbReference>
<dbReference type="InterPro" id="IPR005732">
    <property type="entry name" value="Ribosomal_uS19_bac-type"/>
</dbReference>
<dbReference type="InterPro" id="IPR020934">
    <property type="entry name" value="Ribosomal_uS19_CS"/>
</dbReference>
<dbReference type="InterPro" id="IPR023575">
    <property type="entry name" value="Ribosomal_uS19_SF"/>
</dbReference>
<dbReference type="NCBIfam" id="TIGR01050">
    <property type="entry name" value="rpsS_bact"/>
    <property type="match status" value="1"/>
</dbReference>
<dbReference type="PANTHER" id="PTHR11880">
    <property type="entry name" value="RIBOSOMAL PROTEIN S19P FAMILY MEMBER"/>
    <property type="match status" value="1"/>
</dbReference>
<dbReference type="PANTHER" id="PTHR11880:SF8">
    <property type="entry name" value="SMALL RIBOSOMAL SUBUNIT PROTEIN US19M"/>
    <property type="match status" value="1"/>
</dbReference>
<dbReference type="Pfam" id="PF00203">
    <property type="entry name" value="Ribosomal_S19"/>
    <property type="match status" value="1"/>
</dbReference>
<dbReference type="PIRSF" id="PIRSF002144">
    <property type="entry name" value="Ribosomal_S19"/>
    <property type="match status" value="1"/>
</dbReference>
<dbReference type="PRINTS" id="PR00975">
    <property type="entry name" value="RIBOSOMALS19"/>
</dbReference>
<dbReference type="SUPFAM" id="SSF54570">
    <property type="entry name" value="Ribosomal protein S19"/>
    <property type="match status" value="1"/>
</dbReference>
<dbReference type="PROSITE" id="PS00323">
    <property type="entry name" value="RIBOSOMAL_S19"/>
    <property type="match status" value="1"/>
</dbReference>
<name>RS19_NAUPA</name>
<feature type="chain" id="PRO_1000146404" description="Small ribosomal subunit protein uS19">
    <location>
        <begin position="1"/>
        <end position="93"/>
    </location>
</feature>
<organism>
    <name type="scientific">Nautilia profundicola (strain ATCC BAA-1463 / DSM 18972 / AmH)</name>
    <dbReference type="NCBI Taxonomy" id="598659"/>
    <lineage>
        <taxon>Bacteria</taxon>
        <taxon>Pseudomonadati</taxon>
        <taxon>Campylobacterota</taxon>
        <taxon>Epsilonproteobacteria</taxon>
        <taxon>Nautiliales</taxon>
        <taxon>Nautiliaceae</taxon>
        <taxon>Nautilia</taxon>
    </lineage>
</organism>